<keyword id="KW-0028">Amino-acid biosynthesis</keyword>
<keyword id="KW-0963">Cytoplasm</keyword>
<keyword id="KW-0554">One-carbon metabolism</keyword>
<keyword id="KW-0663">Pyridoxal phosphate</keyword>
<keyword id="KW-1185">Reference proteome</keyword>
<keyword id="KW-0808">Transferase</keyword>
<gene>
    <name evidence="1" type="primary">glyA</name>
    <name type="ordered locus">SP_1024</name>
</gene>
<proteinExistence type="inferred from homology"/>
<sequence length="418" mass="45243">MIFDKDDFKAYDADLWNAIAKEEERQQNNIELIASENVVSKAVMAAQGSILTNKYAEGYPGRRYYGGTDVVDVVETLAIERAKEIFGAKFANVQPHSGSQANCAAYMSLIEPGDTVMGMDLASGGHLTHGAPVSFSGQTYNFVSYSVDPKTELLDFDAILKQAQEVKPKLIVAGASAYSQIIDFSKFREIADAVGAKLMVDMAHIAGLVAAGLHPSPVPYAHITTTTTHKTLRGPRGGLILTNDEELAKKINSAIFPGIQGGPLEHVVAAKAVSFKEVLDPAFKEYAANVIKNSKAMADVFLQDPDFRIISGGTENHLFLVDVTKVVENGKVAQNLLDEVNITLNKNSIPYESLSPFKTSGIRIGAAAITARGFGEEESRKVAELIIKTLKNSENEAVLEEVRSAVKELTDAFPLYED</sequence>
<dbReference type="EC" id="2.1.2.1" evidence="1"/>
<dbReference type="EMBL" id="AE005672">
    <property type="protein sequence ID" value="AAK75139.1"/>
    <property type="molecule type" value="Genomic_DNA"/>
</dbReference>
<dbReference type="PIR" id="B95118">
    <property type="entry name" value="B95118"/>
</dbReference>
<dbReference type="RefSeq" id="WP_000575527.1">
    <property type="nucleotide sequence ID" value="NZ_CP155539.1"/>
</dbReference>
<dbReference type="SMR" id="Q97R16"/>
<dbReference type="PaxDb" id="170187-SP_1024"/>
<dbReference type="EnsemblBacteria" id="AAK75139">
    <property type="protein sequence ID" value="AAK75139"/>
    <property type="gene ID" value="SP_1024"/>
</dbReference>
<dbReference type="KEGG" id="spn:SP_1024"/>
<dbReference type="eggNOG" id="COG0112">
    <property type="taxonomic scope" value="Bacteria"/>
</dbReference>
<dbReference type="PhylomeDB" id="Q97R16"/>
<dbReference type="BioCyc" id="SPNE170187:G1FZB-1054-MONOMER"/>
<dbReference type="UniPathway" id="UPA00193"/>
<dbReference type="UniPathway" id="UPA00288">
    <property type="reaction ID" value="UER01023"/>
</dbReference>
<dbReference type="Proteomes" id="UP000000585">
    <property type="component" value="Chromosome"/>
</dbReference>
<dbReference type="GO" id="GO:0005829">
    <property type="term" value="C:cytosol"/>
    <property type="evidence" value="ECO:0007669"/>
    <property type="project" value="TreeGrafter"/>
</dbReference>
<dbReference type="GO" id="GO:0004372">
    <property type="term" value="F:glycine hydroxymethyltransferase activity"/>
    <property type="evidence" value="ECO:0007669"/>
    <property type="project" value="UniProtKB-UniRule"/>
</dbReference>
<dbReference type="GO" id="GO:0030170">
    <property type="term" value="F:pyridoxal phosphate binding"/>
    <property type="evidence" value="ECO:0007669"/>
    <property type="project" value="UniProtKB-UniRule"/>
</dbReference>
<dbReference type="GO" id="GO:0019264">
    <property type="term" value="P:glycine biosynthetic process from serine"/>
    <property type="evidence" value="ECO:0007669"/>
    <property type="project" value="UniProtKB-UniRule"/>
</dbReference>
<dbReference type="GO" id="GO:0035999">
    <property type="term" value="P:tetrahydrofolate interconversion"/>
    <property type="evidence" value="ECO:0007669"/>
    <property type="project" value="UniProtKB-UniRule"/>
</dbReference>
<dbReference type="CDD" id="cd00378">
    <property type="entry name" value="SHMT"/>
    <property type="match status" value="1"/>
</dbReference>
<dbReference type="FunFam" id="3.40.640.10:FF:000001">
    <property type="entry name" value="Serine hydroxymethyltransferase"/>
    <property type="match status" value="1"/>
</dbReference>
<dbReference type="FunFam" id="3.90.1150.10:FF:000072">
    <property type="entry name" value="Serine hydroxymethyltransferase"/>
    <property type="match status" value="1"/>
</dbReference>
<dbReference type="Gene3D" id="3.90.1150.10">
    <property type="entry name" value="Aspartate Aminotransferase, domain 1"/>
    <property type="match status" value="1"/>
</dbReference>
<dbReference type="Gene3D" id="3.40.640.10">
    <property type="entry name" value="Type I PLP-dependent aspartate aminotransferase-like (Major domain)"/>
    <property type="match status" value="1"/>
</dbReference>
<dbReference type="HAMAP" id="MF_00051">
    <property type="entry name" value="SHMT"/>
    <property type="match status" value="1"/>
</dbReference>
<dbReference type="InterPro" id="IPR015424">
    <property type="entry name" value="PyrdxlP-dep_Trfase"/>
</dbReference>
<dbReference type="InterPro" id="IPR015421">
    <property type="entry name" value="PyrdxlP-dep_Trfase_major"/>
</dbReference>
<dbReference type="InterPro" id="IPR015422">
    <property type="entry name" value="PyrdxlP-dep_Trfase_small"/>
</dbReference>
<dbReference type="InterPro" id="IPR001085">
    <property type="entry name" value="Ser_HO-MeTrfase"/>
</dbReference>
<dbReference type="InterPro" id="IPR049943">
    <property type="entry name" value="Ser_HO-MeTrfase-like"/>
</dbReference>
<dbReference type="InterPro" id="IPR019798">
    <property type="entry name" value="Ser_HO-MeTrfase_PLP_BS"/>
</dbReference>
<dbReference type="InterPro" id="IPR039429">
    <property type="entry name" value="SHMT-like_dom"/>
</dbReference>
<dbReference type="NCBIfam" id="NF000586">
    <property type="entry name" value="PRK00011.1"/>
    <property type="match status" value="1"/>
</dbReference>
<dbReference type="PANTHER" id="PTHR11680">
    <property type="entry name" value="SERINE HYDROXYMETHYLTRANSFERASE"/>
    <property type="match status" value="1"/>
</dbReference>
<dbReference type="PANTHER" id="PTHR11680:SF35">
    <property type="entry name" value="SERINE HYDROXYMETHYLTRANSFERASE 1"/>
    <property type="match status" value="1"/>
</dbReference>
<dbReference type="Pfam" id="PF00464">
    <property type="entry name" value="SHMT"/>
    <property type="match status" value="1"/>
</dbReference>
<dbReference type="PIRSF" id="PIRSF000412">
    <property type="entry name" value="SHMT"/>
    <property type="match status" value="1"/>
</dbReference>
<dbReference type="SUPFAM" id="SSF53383">
    <property type="entry name" value="PLP-dependent transferases"/>
    <property type="match status" value="1"/>
</dbReference>
<dbReference type="PROSITE" id="PS00096">
    <property type="entry name" value="SHMT"/>
    <property type="match status" value="1"/>
</dbReference>
<accession>Q97R16</accession>
<feature type="chain" id="PRO_0000113674" description="Serine hydroxymethyltransferase">
    <location>
        <begin position="1"/>
        <end position="418"/>
    </location>
</feature>
<feature type="binding site" evidence="1">
    <location>
        <position position="121"/>
    </location>
    <ligand>
        <name>(6S)-5,6,7,8-tetrahydrofolate</name>
        <dbReference type="ChEBI" id="CHEBI:57453"/>
    </ligand>
</feature>
<feature type="binding site" evidence="1">
    <location>
        <begin position="125"/>
        <end position="127"/>
    </location>
    <ligand>
        <name>(6S)-5,6,7,8-tetrahydrofolate</name>
        <dbReference type="ChEBI" id="CHEBI:57453"/>
    </ligand>
</feature>
<feature type="binding site" evidence="1">
    <location>
        <position position="246"/>
    </location>
    <ligand>
        <name>(6S)-5,6,7,8-tetrahydrofolate</name>
        <dbReference type="ChEBI" id="CHEBI:57453"/>
    </ligand>
</feature>
<feature type="binding site" evidence="1">
    <location>
        <begin position="355"/>
        <end position="357"/>
    </location>
    <ligand>
        <name>(6S)-5,6,7,8-tetrahydrofolate</name>
        <dbReference type="ChEBI" id="CHEBI:57453"/>
    </ligand>
</feature>
<feature type="site" description="Plays an important role in substrate specificity" evidence="1">
    <location>
        <position position="229"/>
    </location>
</feature>
<feature type="modified residue" description="N6-(pyridoxal phosphate)lysine" evidence="1">
    <location>
        <position position="230"/>
    </location>
</feature>
<reference key="1">
    <citation type="journal article" date="2001" name="Science">
        <title>Complete genome sequence of a virulent isolate of Streptococcus pneumoniae.</title>
        <authorList>
            <person name="Tettelin H."/>
            <person name="Nelson K.E."/>
            <person name="Paulsen I.T."/>
            <person name="Eisen J.A."/>
            <person name="Read T.D."/>
            <person name="Peterson S.N."/>
            <person name="Heidelberg J.F."/>
            <person name="DeBoy R.T."/>
            <person name="Haft D.H."/>
            <person name="Dodson R.J."/>
            <person name="Durkin A.S."/>
            <person name="Gwinn M.L."/>
            <person name="Kolonay J.F."/>
            <person name="Nelson W.C."/>
            <person name="Peterson J.D."/>
            <person name="Umayam L.A."/>
            <person name="White O."/>
            <person name="Salzberg S.L."/>
            <person name="Lewis M.R."/>
            <person name="Radune D."/>
            <person name="Holtzapple E.K."/>
            <person name="Khouri H.M."/>
            <person name="Wolf A.M."/>
            <person name="Utterback T.R."/>
            <person name="Hansen C.L."/>
            <person name="McDonald L.A."/>
            <person name="Feldblyum T.V."/>
            <person name="Angiuoli S.V."/>
            <person name="Dickinson T."/>
            <person name="Hickey E.K."/>
            <person name="Holt I.E."/>
            <person name="Loftus B.J."/>
            <person name="Yang F."/>
            <person name="Smith H.O."/>
            <person name="Venter J.C."/>
            <person name="Dougherty B.A."/>
            <person name="Morrison D.A."/>
            <person name="Hollingshead S.K."/>
            <person name="Fraser C.M."/>
        </authorList>
    </citation>
    <scope>NUCLEOTIDE SEQUENCE [LARGE SCALE GENOMIC DNA]</scope>
    <source>
        <strain>ATCC BAA-334 / TIGR4</strain>
    </source>
</reference>
<organism>
    <name type="scientific">Streptococcus pneumoniae serotype 4 (strain ATCC BAA-334 / TIGR4)</name>
    <dbReference type="NCBI Taxonomy" id="170187"/>
    <lineage>
        <taxon>Bacteria</taxon>
        <taxon>Bacillati</taxon>
        <taxon>Bacillota</taxon>
        <taxon>Bacilli</taxon>
        <taxon>Lactobacillales</taxon>
        <taxon>Streptococcaceae</taxon>
        <taxon>Streptococcus</taxon>
    </lineage>
</organism>
<protein>
    <recommendedName>
        <fullName evidence="1">Serine hydroxymethyltransferase</fullName>
        <shortName evidence="1">SHMT</shortName>
        <shortName evidence="1">Serine methylase</shortName>
        <ecNumber evidence="1">2.1.2.1</ecNumber>
    </recommendedName>
</protein>
<comment type="function">
    <text evidence="1">Catalyzes the reversible interconversion of serine and glycine with tetrahydrofolate (THF) serving as the one-carbon carrier. This reaction serves as the major source of one-carbon groups required for the biosynthesis of purines, thymidylate, methionine, and other important biomolecules. Also exhibits THF-independent aldolase activity toward beta-hydroxyamino acids, producing glycine and aldehydes, via a retro-aldol mechanism.</text>
</comment>
<comment type="catalytic activity">
    <reaction evidence="1">
        <text>(6R)-5,10-methylene-5,6,7,8-tetrahydrofolate + glycine + H2O = (6S)-5,6,7,8-tetrahydrofolate + L-serine</text>
        <dbReference type="Rhea" id="RHEA:15481"/>
        <dbReference type="ChEBI" id="CHEBI:15377"/>
        <dbReference type="ChEBI" id="CHEBI:15636"/>
        <dbReference type="ChEBI" id="CHEBI:33384"/>
        <dbReference type="ChEBI" id="CHEBI:57305"/>
        <dbReference type="ChEBI" id="CHEBI:57453"/>
        <dbReference type="EC" id="2.1.2.1"/>
    </reaction>
</comment>
<comment type="cofactor">
    <cofactor evidence="1">
        <name>pyridoxal 5'-phosphate</name>
        <dbReference type="ChEBI" id="CHEBI:597326"/>
    </cofactor>
</comment>
<comment type="pathway">
    <text evidence="1">One-carbon metabolism; tetrahydrofolate interconversion.</text>
</comment>
<comment type="pathway">
    <text evidence="1">Amino-acid biosynthesis; glycine biosynthesis; glycine from L-serine: step 1/1.</text>
</comment>
<comment type="subunit">
    <text evidence="1">Homodimer.</text>
</comment>
<comment type="subcellular location">
    <subcellularLocation>
        <location evidence="1">Cytoplasm</location>
    </subcellularLocation>
</comment>
<comment type="similarity">
    <text evidence="1">Belongs to the SHMT family.</text>
</comment>
<comment type="caution">
    <text evidence="2">This gene name has also been given to glycosyltransferase GlyA (AC A0A0H2URH7) in this organism.</text>
</comment>
<evidence type="ECO:0000255" key="1">
    <source>
        <dbReference type="HAMAP-Rule" id="MF_00051"/>
    </source>
</evidence>
<evidence type="ECO:0000305" key="2"/>
<name>GLYA_STRPN</name>